<reference key="1">
    <citation type="journal article" date="2007" name="PLoS ONE">
        <title>Molecular correlates of host specialization in Staphylococcus aureus.</title>
        <authorList>
            <person name="Herron-Olson L."/>
            <person name="Fitzgerald J.R."/>
            <person name="Musser J.M."/>
            <person name="Kapur V."/>
        </authorList>
    </citation>
    <scope>NUCLEOTIDE SEQUENCE [LARGE SCALE GENOMIC DNA]</scope>
    <source>
        <strain>bovine RF122 / ET3-1</strain>
    </source>
</reference>
<protein>
    <recommendedName>
        <fullName evidence="1">Carbamoyl phosphate synthase large chain</fullName>
        <ecNumber evidence="1">6.3.4.16</ecNumber>
        <ecNumber evidence="1">6.3.5.5</ecNumber>
    </recommendedName>
    <alternativeName>
        <fullName evidence="1">Carbamoyl phosphate synthetase ammonia chain</fullName>
    </alternativeName>
</protein>
<evidence type="ECO:0000255" key="1">
    <source>
        <dbReference type="HAMAP-Rule" id="MF_01210"/>
    </source>
</evidence>
<comment type="function">
    <text evidence="1">Large subunit of the glutamine-dependent carbamoyl phosphate synthetase (CPSase). CPSase catalyzes the formation of carbamoyl phosphate from the ammonia moiety of glutamine, carbonate, and phosphate donated by ATP, constituting the first step of 2 biosynthetic pathways, one leading to arginine and/or urea and the other to pyrimidine nucleotides. The large subunit (synthetase) binds the substrates ammonia (free or transferred from glutamine from the small subunit), hydrogencarbonate and ATP and carries out an ATP-coupled ligase reaction, activating hydrogencarbonate by forming carboxy phosphate which reacts with ammonia to form carbamoyl phosphate.</text>
</comment>
<comment type="catalytic activity">
    <reaction evidence="1">
        <text>hydrogencarbonate + L-glutamine + 2 ATP + H2O = carbamoyl phosphate + L-glutamate + 2 ADP + phosphate + 2 H(+)</text>
        <dbReference type="Rhea" id="RHEA:18633"/>
        <dbReference type="ChEBI" id="CHEBI:15377"/>
        <dbReference type="ChEBI" id="CHEBI:15378"/>
        <dbReference type="ChEBI" id="CHEBI:17544"/>
        <dbReference type="ChEBI" id="CHEBI:29985"/>
        <dbReference type="ChEBI" id="CHEBI:30616"/>
        <dbReference type="ChEBI" id="CHEBI:43474"/>
        <dbReference type="ChEBI" id="CHEBI:58228"/>
        <dbReference type="ChEBI" id="CHEBI:58359"/>
        <dbReference type="ChEBI" id="CHEBI:456216"/>
        <dbReference type="EC" id="6.3.5.5"/>
    </reaction>
</comment>
<comment type="catalytic activity">
    <molecule>Carbamoyl phosphate synthase large chain</molecule>
    <reaction evidence="1">
        <text>hydrogencarbonate + NH4(+) + 2 ATP = carbamoyl phosphate + 2 ADP + phosphate + 2 H(+)</text>
        <dbReference type="Rhea" id="RHEA:18029"/>
        <dbReference type="ChEBI" id="CHEBI:15378"/>
        <dbReference type="ChEBI" id="CHEBI:17544"/>
        <dbReference type="ChEBI" id="CHEBI:28938"/>
        <dbReference type="ChEBI" id="CHEBI:30616"/>
        <dbReference type="ChEBI" id="CHEBI:43474"/>
        <dbReference type="ChEBI" id="CHEBI:58228"/>
        <dbReference type="ChEBI" id="CHEBI:456216"/>
        <dbReference type="EC" id="6.3.4.16"/>
    </reaction>
</comment>
<comment type="cofactor">
    <cofactor evidence="1">
        <name>Mg(2+)</name>
        <dbReference type="ChEBI" id="CHEBI:18420"/>
    </cofactor>
    <cofactor evidence="1">
        <name>Mn(2+)</name>
        <dbReference type="ChEBI" id="CHEBI:29035"/>
    </cofactor>
    <text evidence="1">Binds 4 Mg(2+) or Mn(2+) ions per subunit.</text>
</comment>
<comment type="pathway">
    <text evidence="1">Amino-acid biosynthesis; L-arginine biosynthesis; carbamoyl phosphate from bicarbonate: step 1/1.</text>
</comment>
<comment type="pathway">
    <text evidence="1">Pyrimidine metabolism; UMP biosynthesis via de novo pathway; (S)-dihydroorotate from bicarbonate: step 1/3.</text>
</comment>
<comment type="subunit">
    <text evidence="1">Composed of two chains; the small (or glutamine) chain promotes the hydrolysis of glutamine to ammonia, which is used by the large (or ammonia) chain to synthesize carbamoyl phosphate. Tetramer of heterodimers (alpha,beta)4.</text>
</comment>
<comment type="domain">
    <text evidence="1">The large subunit is composed of 2 ATP-grasp domains that are involved in binding the 2 ATP molecules needed for carbamoyl phosphate synthesis. The N-terminal ATP-grasp domain (referred to as the carboxyphosphate synthetic component) catalyzes the ATP-dependent phosphorylation of hydrogencarbonate to carboxyphosphate and the subsequent nucleophilic attack by ammonia to form a carbamate intermediate. The C-terminal ATP-grasp domain (referred to as the carbamoyl phosphate synthetic component) then catalyzes the phosphorylation of carbamate with the second ATP to form the end product carbamoyl phosphate. The reactive and unstable enzyme intermediates are sequentially channeled from one active site to the next through the interior of the protein over a distance of at least 96 A.</text>
</comment>
<comment type="similarity">
    <text evidence="1">Belongs to the CarB family.</text>
</comment>
<feature type="chain" id="PRO_1000066381" description="Carbamoyl phosphate synthase large chain">
    <location>
        <begin position="1"/>
        <end position="1057"/>
    </location>
</feature>
<feature type="domain" description="ATP-grasp 1" evidence="1">
    <location>
        <begin position="133"/>
        <end position="327"/>
    </location>
</feature>
<feature type="domain" description="ATP-grasp 2" evidence="1">
    <location>
        <begin position="671"/>
        <end position="861"/>
    </location>
</feature>
<feature type="domain" description="MGS-like" evidence="1">
    <location>
        <begin position="930"/>
        <end position="1057"/>
    </location>
</feature>
<feature type="region of interest" description="Carboxyphosphate synthetic domain" evidence="1">
    <location>
        <begin position="1"/>
        <end position="401"/>
    </location>
</feature>
<feature type="region of interest" description="Oligomerization domain" evidence="1">
    <location>
        <begin position="402"/>
        <end position="546"/>
    </location>
</feature>
<feature type="region of interest" description="Carbamoyl phosphate synthetic domain" evidence="1">
    <location>
        <begin position="547"/>
        <end position="929"/>
    </location>
</feature>
<feature type="region of interest" description="Allosteric domain" evidence="1">
    <location>
        <begin position="930"/>
        <end position="1057"/>
    </location>
</feature>
<feature type="binding site" evidence="1">
    <location>
        <position position="129"/>
    </location>
    <ligand>
        <name>ATP</name>
        <dbReference type="ChEBI" id="CHEBI:30616"/>
        <label>1</label>
    </ligand>
</feature>
<feature type="binding site" evidence="1">
    <location>
        <position position="169"/>
    </location>
    <ligand>
        <name>ATP</name>
        <dbReference type="ChEBI" id="CHEBI:30616"/>
        <label>1</label>
    </ligand>
</feature>
<feature type="binding site" evidence="1">
    <location>
        <position position="175"/>
    </location>
    <ligand>
        <name>ATP</name>
        <dbReference type="ChEBI" id="CHEBI:30616"/>
        <label>1</label>
    </ligand>
</feature>
<feature type="binding site" evidence="1">
    <location>
        <position position="176"/>
    </location>
    <ligand>
        <name>ATP</name>
        <dbReference type="ChEBI" id="CHEBI:30616"/>
        <label>1</label>
    </ligand>
</feature>
<feature type="binding site" evidence="1">
    <location>
        <position position="208"/>
    </location>
    <ligand>
        <name>ATP</name>
        <dbReference type="ChEBI" id="CHEBI:30616"/>
        <label>1</label>
    </ligand>
</feature>
<feature type="binding site" evidence="1">
    <location>
        <position position="210"/>
    </location>
    <ligand>
        <name>ATP</name>
        <dbReference type="ChEBI" id="CHEBI:30616"/>
        <label>1</label>
    </ligand>
</feature>
<feature type="binding site" evidence="1">
    <location>
        <position position="215"/>
    </location>
    <ligand>
        <name>ATP</name>
        <dbReference type="ChEBI" id="CHEBI:30616"/>
        <label>1</label>
    </ligand>
</feature>
<feature type="binding site" evidence="1">
    <location>
        <position position="241"/>
    </location>
    <ligand>
        <name>ATP</name>
        <dbReference type="ChEBI" id="CHEBI:30616"/>
        <label>1</label>
    </ligand>
</feature>
<feature type="binding site" evidence="1">
    <location>
        <position position="242"/>
    </location>
    <ligand>
        <name>ATP</name>
        <dbReference type="ChEBI" id="CHEBI:30616"/>
        <label>1</label>
    </ligand>
</feature>
<feature type="binding site" evidence="1">
    <location>
        <position position="243"/>
    </location>
    <ligand>
        <name>ATP</name>
        <dbReference type="ChEBI" id="CHEBI:30616"/>
        <label>1</label>
    </ligand>
</feature>
<feature type="binding site" evidence="1">
    <location>
        <position position="284"/>
    </location>
    <ligand>
        <name>ATP</name>
        <dbReference type="ChEBI" id="CHEBI:30616"/>
        <label>1</label>
    </ligand>
</feature>
<feature type="binding site" evidence="1">
    <location>
        <position position="284"/>
    </location>
    <ligand>
        <name>Mg(2+)</name>
        <dbReference type="ChEBI" id="CHEBI:18420"/>
        <label>1</label>
    </ligand>
</feature>
<feature type="binding site" evidence="1">
    <location>
        <position position="284"/>
    </location>
    <ligand>
        <name>Mn(2+)</name>
        <dbReference type="ChEBI" id="CHEBI:29035"/>
        <label>1</label>
    </ligand>
</feature>
<feature type="binding site" evidence="1">
    <location>
        <position position="298"/>
    </location>
    <ligand>
        <name>ATP</name>
        <dbReference type="ChEBI" id="CHEBI:30616"/>
        <label>1</label>
    </ligand>
</feature>
<feature type="binding site" evidence="1">
    <location>
        <position position="298"/>
    </location>
    <ligand>
        <name>Mg(2+)</name>
        <dbReference type="ChEBI" id="CHEBI:18420"/>
        <label>1</label>
    </ligand>
</feature>
<feature type="binding site" evidence="1">
    <location>
        <position position="298"/>
    </location>
    <ligand>
        <name>Mg(2+)</name>
        <dbReference type="ChEBI" id="CHEBI:18420"/>
        <label>2</label>
    </ligand>
</feature>
<feature type="binding site" evidence="1">
    <location>
        <position position="298"/>
    </location>
    <ligand>
        <name>Mn(2+)</name>
        <dbReference type="ChEBI" id="CHEBI:29035"/>
        <label>1</label>
    </ligand>
</feature>
<feature type="binding site" evidence="1">
    <location>
        <position position="298"/>
    </location>
    <ligand>
        <name>Mn(2+)</name>
        <dbReference type="ChEBI" id="CHEBI:29035"/>
        <label>2</label>
    </ligand>
</feature>
<feature type="binding site" evidence="1">
    <location>
        <position position="300"/>
    </location>
    <ligand>
        <name>Mg(2+)</name>
        <dbReference type="ChEBI" id="CHEBI:18420"/>
        <label>2</label>
    </ligand>
</feature>
<feature type="binding site" evidence="1">
    <location>
        <position position="300"/>
    </location>
    <ligand>
        <name>Mn(2+)</name>
        <dbReference type="ChEBI" id="CHEBI:29035"/>
        <label>2</label>
    </ligand>
</feature>
<feature type="binding site" evidence="1">
    <location>
        <position position="707"/>
    </location>
    <ligand>
        <name>ATP</name>
        <dbReference type="ChEBI" id="CHEBI:30616"/>
        <label>2</label>
    </ligand>
</feature>
<feature type="binding site" evidence="1">
    <location>
        <position position="746"/>
    </location>
    <ligand>
        <name>ATP</name>
        <dbReference type="ChEBI" id="CHEBI:30616"/>
        <label>2</label>
    </ligand>
</feature>
<feature type="binding site" evidence="1">
    <location>
        <position position="748"/>
    </location>
    <ligand>
        <name>ATP</name>
        <dbReference type="ChEBI" id="CHEBI:30616"/>
        <label>2</label>
    </ligand>
</feature>
<feature type="binding site" evidence="1">
    <location>
        <position position="752"/>
    </location>
    <ligand>
        <name>ATP</name>
        <dbReference type="ChEBI" id="CHEBI:30616"/>
        <label>2</label>
    </ligand>
</feature>
<feature type="binding site" evidence="1">
    <location>
        <position position="777"/>
    </location>
    <ligand>
        <name>ATP</name>
        <dbReference type="ChEBI" id="CHEBI:30616"/>
        <label>2</label>
    </ligand>
</feature>
<feature type="binding site" evidence="1">
    <location>
        <position position="778"/>
    </location>
    <ligand>
        <name>ATP</name>
        <dbReference type="ChEBI" id="CHEBI:30616"/>
        <label>2</label>
    </ligand>
</feature>
<feature type="binding site" evidence="1">
    <location>
        <position position="779"/>
    </location>
    <ligand>
        <name>ATP</name>
        <dbReference type="ChEBI" id="CHEBI:30616"/>
        <label>2</label>
    </ligand>
</feature>
<feature type="binding site" evidence="1">
    <location>
        <position position="780"/>
    </location>
    <ligand>
        <name>ATP</name>
        <dbReference type="ChEBI" id="CHEBI:30616"/>
        <label>2</label>
    </ligand>
</feature>
<feature type="binding site" evidence="1">
    <location>
        <position position="820"/>
    </location>
    <ligand>
        <name>ATP</name>
        <dbReference type="ChEBI" id="CHEBI:30616"/>
        <label>2</label>
    </ligand>
</feature>
<feature type="binding site" evidence="1">
    <location>
        <position position="820"/>
    </location>
    <ligand>
        <name>Mg(2+)</name>
        <dbReference type="ChEBI" id="CHEBI:18420"/>
        <label>3</label>
    </ligand>
</feature>
<feature type="binding site" evidence="1">
    <location>
        <position position="820"/>
    </location>
    <ligand>
        <name>Mn(2+)</name>
        <dbReference type="ChEBI" id="CHEBI:29035"/>
        <label>3</label>
    </ligand>
</feature>
<feature type="binding site" evidence="1">
    <location>
        <position position="832"/>
    </location>
    <ligand>
        <name>ATP</name>
        <dbReference type="ChEBI" id="CHEBI:30616"/>
        <label>2</label>
    </ligand>
</feature>
<feature type="binding site" evidence="1">
    <location>
        <position position="832"/>
    </location>
    <ligand>
        <name>Mg(2+)</name>
        <dbReference type="ChEBI" id="CHEBI:18420"/>
        <label>3</label>
    </ligand>
</feature>
<feature type="binding site" evidence="1">
    <location>
        <position position="832"/>
    </location>
    <ligand>
        <name>Mg(2+)</name>
        <dbReference type="ChEBI" id="CHEBI:18420"/>
        <label>4</label>
    </ligand>
</feature>
<feature type="binding site" evidence="1">
    <location>
        <position position="832"/>
    </location>
    <ligand>
        <name>Mn(2+)</name>
        <dbReference type="ChEBI" id="CHEBI:29035"/>
        <label>3</label>
    </ligand>
</feature>
<feature type="binding site" evidence="1">
    <location>
        <position position="832"/>
    </location>
    <ligand>
        <name>Mn(2+)</name>
        <dbReference type="ChEBI" id="CHEBI:29035"/>
        <label>4</label>
    </ligand>
</feature>
<feature type="binding site" evidence="1">
    <location>
        <position position="834"/>
    </location>
    <ligand>
        <name>Mg(2+)</name>
        <dbReference type="ChEBI" id="CHEBI:18420"/>
        <label>4</label>
    </ligand>
</feature>
<feature type="binding site" evidence="1">
    <location>
        <position position="834"/>
    </location>
    <ligand>
        <name>Mn(2+)</name>
        <dbReference type="ChEBI" id="CHEBI:29035"/>
        <label>4</label>
    </ligand>
</feature>
<keyword id="KW-0028">Amino-acid biosynthesis</keyword>
<keyword id="KW-0055">Arginine biosynthesis</keyword>
<keyword id="KW-0067">ATP-binding</keyword>
<keyword id="KW-0436">Ligase</keyword>
<keyword id="KW-0460">Magnesium</keyword>
<keyword id="KW-0464">Manganese</keyword>
<keyword id="KW-0479">Metal-binding</keyword>
<keyword id="KW-0547">Nucleotide-binding</keyword>
<keyword id="KW-0665">Pyrimidine biosynthesis</keyword>
<keyword id="KW-0677">Repeat</keyword>
<name>CARB_STAAB</name>
<proteinExistence type="inferred from homology"/>
<dbReference type="EC" id="6.3.4.16" evidence="1"/>
<dbReference type="EC" id="6.3.5.5" evidence="1"/>
<dbReference type="EMBL" id="AJ938182">
    <property type="protein sequence ID" value="CAI80756.1"/>
    <property type="molecule type" value="Genomic_DNA"/>
</dbReference>
<dbReference type="RefSeq" id="WP_001126271.1">
    <property type="nucleotide sequence ID" value="NC_007622.1"/>
</dbReference>
<dbReference type="SMR" id="Q2YXG5"/>
<dbReference type="KEGG" id="sab:SAB1067"/>
<dbReference type="HOGENOM" id="CLU_000513_1_3_9"/>
<dbReference type="UniPathway" id="UPA00068">
    <property type="reaction ID" value="UER00171"/>
</dbReference>
<dbReference type="UniPathway" id="UPA00070">
    <property type="reaction ID" value="UER00115"/>
</dbReference>
<dbReference type="GO" id="GO:0005737">
    <property type="term" value="C:cytoplasm"/>
    <property type="evidence" value="ECO:0007669"/>
    <property type="project" value="TreeGrafter"/>
</dbReference>
<dbReference type="GO" id="GO:0005524">
    <property type="term" value="F:ATP binding"/>
    <property type="evidence" value="ECO:0007669"/>
    <property type="project" value="UniProtKB-UniRule"/>
</dbReference>
<dbReference type="GO" id="GO:0004087">
    <property type="term" value="F:carbamoyl-phosphate synthase (ammonia) activity"/>
    <property type="evidence" value="ECO:0007669"/>
    <property type="project" value="RHEA"/>
</dbReference>
<dbReference type="GO" id="GO:0004088">
    <property type="term" value="F:carbamoyl-phosphate synthase (glutamine-hydrolyzing) activity"/>
    <property type="evidence" value="ECO:0007669"/>
    <property type="project" value="UniProtKB-UniRule"/>
</dbReference>
<dbReference type="GO" id="GO:0046872">
    <property type="term" value="F:metal ion binding"/>
    <property type="evidence" value="ECO:0007669"/>
    <property type="project" value="UniProtKB-KW"/>
</dbReference>
<dbReference type="GO" id="GO:0044205">
    <property type="term" value="P:'de novo' UMP biosynthetic process"/>
    <property type="evidence" value="ECO:0007669"/>
    <property type="project" value="UniProtKB-UniRule"/>
</dbReference>
<dbReference type="GO" id="GO:0006541">
    <property type="term" value="P:glutamine metabolic process"/>
    <property type="evidence" value="ECO:0007669"/>
    <property type="project" value="TreeGrafter"/>
</dbReference>
<dbReference type="GO" id="GO:0006526">
    <property type="term" value="P:L-arginine biosynthetic process"/>
    <property type="evidence" value="ECO:0007669"/>
    <property type="project" value="UniProtKB-UniRule"/>
</dbReference>
<dbReference type="CDD" id="cd01424">
    <property type="entry name" value="MGS_CPS_II"/>
    <property type="match status" value="1"/>
</dbReference>
<dbReference type="FunFam" id="1.10.1030.10:FF:000002">
    <property type="entry name" value="Carbamoyl-phosphate synthase large chain"/>
    <property type="match status" value="1"/>
</dbReference>
<dbReference type="FunFam" id="3.30.1490.20:FF:000001">
    <property type="entry name" value="Carbamoyl-phosphate synthase large chain"/>
    <property type="match status" value="1"/>
</dbReference>
<dbReference type="FunFam" id="3.30.470.20:FF:000001">
    <property type="entry name" value="Carbamoyl-phosphate synthase large chain"/>
    <property type="match status" value="1"/>
</dbReference>
<dbReference type="FunFam" id="3.30.470.20:FF:000026">
    <property type="entry name" value="Carbamoyl-phosphate synthase large chain"/>
    <property type="match status" value="1"/>
</dbReference>
<dbReference type="FunFam" id="3.40.50.1380:FF:000011">
    <property type="entry name" value="Carbamoyl-phosphate synthase large chain"/>
    <property type="match status" value="1"/>
</dbReference>
<dbReference type="FunFam" id="3.40.50.20:FF:000001">
    <property type="entry name" value="Carbamoyl-phosphate synthase large chain"/>
    <property type="match status" value="2"/>
</dbReference>
<dbReference type="Gene3D" id="3.40.50.20">
    <property type="match status" value="2"/>
</dbReference>
<dbReference type="Gene3D" id="3.30.1490.20">
    <property type="entry name" value="ATP-grasp fold, A domain"/>
    <property type="match status" value="1"/>
</dbReference>
<dbReference type="Gene3D" id="3.30.470.20">
    <property type="entry name" value="ATP-grasp fold, B domain"/>
    <property type="match status" value="2"/>
</dbReference>
<dbReference type="Gene3D" id="1.10.1030.10">
    <property type="entry name" value="Carbamoyl-phosphate synthetase, large subunit oligomerisation domain"/>
    <property type="match status" value="1"/>
</dbReference>
<dbReference type="Gene3D" id="3.40.50.1380">
    <property type="entry name" value="Methylglyoxal synthase-like domain"/>
    <property type="match status" value="1"/>
</dbReference>
<dbReference type="HAMAP" id="MF_01210_A">
    <property type="entry name" value="CPSase_L_chain_A"/>
    <property type="match status" value="1"/>
</dbReference>
<dbReference type="HAMAP" id="MF_01210_B">
    <property type="entry name" value="CPSase_L_chain_B"/>
    <property type="match status" value="1"/>
</dbReference>
<dbReference type="InterPro" id="IPR011761">
    <property type="entry name" value="ATP-grasp"/>
</dbReference>
<dbReference type="InterPro" id="IPR013815">
    <property type="entry name" value="ATP_grasp_subdomain_1"/>
</dbReference>
<dbReference type="InterPro" id="IPR006275">
    <property type="entry name" value="CarbamoylP_synth_lsu"/>
</dbReference>
<dbReference type="InterPro" id="IPR005480">
    <property type="entry name" value="CarbamoylP_synth_lsu_oligo"/>
</dbReference>
<dbReference type="InterPro" id="IPR036897">
    <property type="entry name" value="CarbamoylP_synth_lsu_oligo_sf"/>
</dbReference>
<dbReference type="InterPro" id="IPR005479">
    <property type="entry name" value="CbamoylP_synth_lsu-like_ATP-bd"/>
</dbReference>
<dbReference type="InterPro" id="IPR005483">
    <property type="entry name" value="CbamoylP_synth_lsu_CPSase_dom"/>
</dbReference>
<dbReference type="InterPro" id="IPR011607">
    <property type="entry name" value="MGS-like_dom"/>
</dbReference>
<dbReference type="InterPro" id="IPR036914">
    <property type="entry name" value="MGS-like_dom_sf"/>
</dbReference>
<dbReference type="InterPro" id="IPR033937">
    <property type="entry name" value="MGS_CPS_CarB"/>
</dbReference>
<dbReference type="InterPro" id="IPR016185">
    <property type="entry name" value="PreATP-grasp_dom_sf"/>
</dbReference>
<dbReference type="NCBIfam" id="TIGR01369">
    <property type="entry name" value="CPSaseII_lrg"/>
    <property type="match status" value="1"/>
</dbReference>
<dbReference type="NCBIfam" id="NF003671">
    <property type="entry name" value="PRK05294.1"/>
    <property type="match status" value="1"/>
</dbReference>
<dbReference type="NCBIfam" id="NF009455">
    <property type="entry name" value="PRK12815.1"/>
    <property type="match status" value="1"/>
</dbReference>
<dbReference type="PANTHER" id="PTHR11405:SF53">
    <property type="entry name" value="CARBAMOYL-PHOSPHATE SYNTHASE [AMMONIA], MITOCHONDRIAL"/>
    <property type="match status" value="1"/>
</dbReference>
<dbReference type="PANTHER" id="PTHR11405">
    <property type="entry name" value="CARBAMOYLTRANSFERASE FAMILY MEMBER"/>
    <property type="match status" value="1"/>
</dbReference>
<dbReference type="Pfam" id="PF02786">
    <property type="entry name" value="CPSase_L_D2"/>
    <property type="match status" value="2"/>
</dbReference>
<dbReference type="Pfam" id="PF02787">
    <property type="entry name" value="CPSase_L_D3"/>
    <property type="match status" value="1"/>
</dbReference>
<dbReference type="Pfam" id="PF02142">
    <property type="entry name" value="MGS"/>
    <property type="match status" value="1"/>
</dbReference>
<dbReference type="PRINTS" id="PR00098">
    <property type="entry name" value="CPSASE"/>
</dbReference>
<dbReference type="SMART" id="SM01096">
    <property type="entry name" value="CPSase_L_D3"/>
    <property type="match status" value="1"/>
</dbReference>
<dbReference type="SMART" id="SM01209">
    <property type="entry name" value="GARS_A"/>
    <property type="match status" value="1"/>
</dbReference>
<dbReference type="SMART" id="SM00851">
    <property type="entry name" value="MGS"/>
    <property type="match status" value="1"/>
</dbReference>
<dbReference type="SUPFAM" id="SSF48108">
    <property type="entry name" value="Carbamoyl phosphate synthetase, large subunit connection domain"/>
    <property type="match status" value="1"/>
</dbReference>
<dbReference type="SUPFAM" id="SSF56059">
    <property type="entry name" value="Glutathione synthetase ATP-binding domain-like"/>
    <property type="match status" value="2"/>
</dbReference>
<dbReference type="SUPFAM" id="SSF52335">
    <property type="entry name" value="Methylglyoxal synthase-like"/>
    <property type="match status" value="1"/>
</dbReference>
<dbReference type="SUPFAM" id="SSF52440">
    <property type="entry name" value="PreATP-grasp domain"/>
    <property type="match status" value="2"/>
</dbReference>
<dbReference type="PROSITE" id="PS50975">
    <property type="entry name" value="ATP_GRASP"/>
    <property type="match status" value="2"/>
</dbReference>
<dbReference type="PROSITE" id="PS00866">
    <property type="entry name" value="CPSASE_1"/>
    <property type="match status" value="2"/>
</dbReference>
<dbReference type="PROSITE" id="PS00867">
    <property type="entry name" value="CPSASE_2"/>
    <property type="match status" value="2"/>
</dbReference>
<dbReference type="PROSITE" id="PS51855">
    <property type="entry name" value="MGS"/>
    <property type="match status" value="1"/>
</dbReference>
<sequence length="1057" mass="117308">MPKRNDIKTILVIGSGPIIIGQAAEFDYAGTQACLALKEEGYRVILVNSNPATIMTDKEIADKVYIEPLTHDFIARIIRKEQPDALLPTLGGQTGLNMAIQLHESGVLQDNNVQLLGTELTSIQQAEDREMFRTLMNYLNVPVPESDIVNTVEQAFKFKEQVGYPLIVRPAFTMGGTGGGICHNDEELHEIVSNGLHYSPATQCLLEKSIAGFKEIEYEVMRDKNDNAIVVCNMENIDPVGIHTGDSIVVAPSQTLSDVEYQMLRDVSLKVIRALGIEGGCNVQLALDPHSFDYYIIEVNPRVSRSSALASKATGYPIAKLAAKIAVGLTLDEMLNPITGTSYATFEPTLDYVISKIPRFPFDKFEKGERELGTQMKATGEVMAIGRTYEESLLKAIRSLEYGVHHLGLPNGESFDLDYIKERISHQDDERLFFIGEAIRRGTTLEEIHNMTQIDYFFLHKFQNIIDIEHQLKEHQGDLEYLKYAKDYGFSDKTIAHRFNMTEEEVYQLRMENDIKPVYKMVDTCAAEFESSTPYYYGTYETENESIITDKEKILVLGSGPIRIGQGVEFDYATVHAVWAIQKAGYEAIIVNNNPETVSTDFSISDKLYFEPLTEEDVMNIINLEKPKGVVVQFGGQTAINLADKLAKHGVKILGTSLENLNRAEDRKEFEALLRKINVPQPQGKTATSPEEALANAAEIGYPVVVRPSYVLGGRAMEIVDNDKELENYMTQAVKASPEHPVLVDRYLTGKEIEVDAICDGETVIIPGIMEHIERAGVHSGDSIAVYPPQTLTEDELTTLEDYTIKLAKGLNIIGLINIQFVIAHDGVYVLEVNPRSSRTVPFLSKITDIPMAQLAMRAIIGEKLTDMGYQEGVQPYAEGVFVKAPVFSFNKLKNVDITLGPEMKSTGEVMGKDTTLEKALFKGLTGSGVEVKDHGTVLMTVSDKDKEEVVKLAQRLNEVGYKILATSGTANKLAEYDIPAEVVGKIGGENDLLTRIQNGDVQIVINTMTKGKEVERDGFQIRRTTVENGIPCLTSLDTANALTNVIESMTFTMRQM</sequence>
<accession>Q2YXG5</accession>
<organism>
    <name type="scientific">Staphylococcus aureus (strain bovine RF122 / ET3-1)</name>
    <dbReference type="NCBI Taxonomy" id="273036"/>
    <lineage>
        <taxon>Bacteria</taxon>
        <taxon>Bacillati</taxon>
        <taxon>Bacillota</taxon>
        <taxon>Bacilli</taxon>
        <taxon>Bacillales</taxon>
        <taxon>Staphylococcaceae</taxon>
        <taxon>Staphylococcus</taxon>
    </lineage>
</organism>
<gene>
    <name evidence="1" type="primary">carB</name>
    <name type="ordered locus">SAB1067</name>
</gene>